<proteinExistence type="inferred from homology"/>
<reference key="1">
    <citation type="journal article" date="2009" name="Genome Biol.">
        <title>Genomic and genetic analyses of diversity and plant interactions of Pseudomonas fluorescens.</title>
        <authorList>
            <person name="Silby M.W."/>
            <person name="Cerdeno-Tarraga A.M."/>
            <person name="Vernikos G.S."/>
            <person name="Giddens S.R."/>
            <person name="Jackson R.W."/>
            <person name="Preston G.M."/>
            <person name="Zhang X.-X."/>
            <person name="Moon C.D."/>
            <person name="Gehrig S.M."/>
            <person name="Godfrey S.A.C."/>
            <person name="Knight C.G."/>
            <person name="Malone J.G."/>
            <person name="Robinson Z."/>
            <person name="Spiers A.J."/>
            <person name="Harris S."/>
            <person name="Challis G.L."/>
            <person name="Yaxley A.M."/>
            <person name="Harris D."/>
            <person name="Seeger K."/>
            <person name="Murphy L."/>
            <person name="Rutter S."/>
            <person name="Squares R."/>
            <person name="Quail M.A."/>
            <person name="Saunders E."/>
            <person name="Mavromatis K."/>
            <person name="Brettin T.S."/>
            <person name="Bentley S.D."/>
            <person name="Hothersall J."/>
            <person name="Stephens E."/>
            <person name="Thomas C.M."/>
            <person name="Parkhill J."/>
            <person name="Levy S.B."/>
            <person name="Rainey P.B."/>
            <person name="Thomson N.R."/>
        </authorList>
    </citation>
    <scope>NUCLEOTIDE SEQUENCE [LARGE SCALE GENOMIC DNA]</scope>
    <source>
        <strain>Pf0-1</strain>
    </source>
</reference>
<sequence>MFSRDLTIAKYDADLFAAMEQEAQRQEEHIELIASENYTSPAVMEAQGSVLTNKYAEGYPGKRYYGGCEYVDVVEQLAIDRAKELFGADYANVQPHAGSQANAAVYLALLSAGDTILGMSLAHGGHLTHGASVSSSGKLYNAIQYGIDANGLIDYDEVERLAVEHKPKMIVAGFSAYSQILDFPRFRAIADKVGAYLFVDMAHVAGLVAAGVYPNPVPFADVVTTTTHKTLRGPRGGLILAKANADIEKKLNSAVFPGAQGGPLEHVIAAKAICFKEALQPEFKAYQQQVVKNAQAMAGVFIERGFDVVSGGTENHLFLLSLIKQEISGKDADAALGKAFITVNKNSVPNDPRSPFVTSGLRFGTPAVTTRGFKEAECKELAGWICDILADLNNEAVIDAVREKVKAICKKLPVYGA</sequence>
<keyword id="KW-0028">Amino-acid biosynthesis</keyword>
<keyword id="KW-0963">Cytoplasm</keyword>
<keyword id="KW-0554">One-carbon metabolism</keyword>
<keyword id="KW-0663">Pyridoxal phosphate</keyword>
<keyword id="KW-0808">Transferase</keyword>
<protein>
    <recommendedName>
        <fullName evidence="1">Serine hydroxymethyltransferase 2</fullName>
        <shortName evidence="1">SHMT 2</shortName>
        <shortName evidence="1">Serine methylase 2</shortName>
        <ecNumber evidence="1">2.1.2.1</ecNumber>
    </recommendedName>
</protein>
<evidence type="ECO:0000255" key="1">
    <source>
        <dbReference type="HAMAP-Rule" id="MF_00051"/>
    </source>
</evidence>
<organism>
    <name type="scientific">Pseudomonas fluorescens (strain Pf0-1)</name>
    <dbReference type="NCBI Taxonomy" id="205922"/>
    <lineage>
        <taxon>Bacteria</taxon>
        <taxon>Pseudomonadati</taxon>
        <taxon>Pseudomonadota</taxon>
        <taxon>Gammaproteobacteria</taxon>
        <taxon>Pseudomonadales</taxon>
        <taxon>Pseudomonadaceae</taxon>
        <taxon>Pseudomonas</taxon>
    </lineage>
</organism>
<name>GLYA2_PSEPF</name>
<dbReference type="EC" id="2.1.2.1" evidence="1"/>
<dbReference type="EMBL" id="CP000094">
    <property type="protein sequence ID" value="ABA76614.1"/>
    <property type="molecule type" value="Genomic_DNA"/>
</dbReference>
<dbReference type="SMR" id="Q3K6J0"/>
<dbReference type="KEGG" id="pfo:Pfl01_4877"/>
<dbReference type="eggNOG" id="COG0112">
    <property type="taxonomic scope" value="Bacteria"/>
</dbReference>
<dbReference type="HOGENOM" id="CLU_022477_2_1_6"/>
<dbReference type="UniPathway" id="UPA00193"/>
<dbReference type="UniPathway" id="UPA00288">
    <property type="reaction ID" value="UER01023"/>
</dbReference>
<dbReference type="Proteomes" id="UP000002704">
    <property type="component" value="Chromosome"/>
</dbReference>
<dbReference type="GO" id="GO:0005829">
    <property type="term" value="C:cytosol"/>
    <property type="evidence" value="ECO:0007669"/>
    <property type="project" value="TreeGrafter"/>
</dbReference>
<dbReference type="GO" id="GO:0004372">
    <property type="term" value="F:glycine hydroxymethyltransferase activity"/>
    <property type="evidence" value="ECO:0007669"/>
    <property type="project" value="UniProtKB-UniRule"/>
</dbReference>
<dbReference type="GO" id="GO:0030170">
    <property type="term" value="F:pyridoxal phosphate binding"/>
    <property type="evidence" value="ECO:0007669"/>
    <property type="project" value="UniProtKB-UniRule"/>
</dbReference>
<dbReference type="GO" id="GO:0019264">
    <property type="term" value="P:glycine biosynthetic process from serine"/>
    <property type="evidence" value="ECO:0007669"/>
    <property type="project" value="UniProtKB-UniRule"/>
</dbReference>
<dbReference type="GO" id="GO:0035999">
    <property type="term" value="P:tetrahydrofolate interconversion"/>
    <property type="evidence" value="ECO:0007669"/>
    <property type="project" value="UniProtKB-UniRule"/>
</dbReference>
<dbReference type="CDD" id="cd00378">
    <property type="entry name" value="SHMT"/>
    <property type="match status" value="1"/>
</dbReference>
<dbReference type="FunFam" id="3.40.640.10:FF:000001">
    <property type="entry name" value="Serine hydroxymethyltransferase"/>
    <property type="match status" value="1"/>
</dbReference>
<dbReference type="FunFam" id="3.90.1150.10:FF:000003">
    <property type="entry name" value="Serine hydroxymethyltransferase"/>
    <property type="match status" value="1"/>
</dbReference>
<dbReference type="Gene3D" id="3.90.1150.10">
    <property type="entry name" value="Aspartate Aminotransferase, domain 1"/>
    <property type="match status" value="1"/>
</dbReference>
<dbReference type="Gene3D" id="3.40.640.10">
    <property type="entry name" value="Type I PLP-dependent aspartate aminotransferase-like (Major domain)"/>
    <property type="match status" value="1"/>
</dbReference>
<dbReference type="HAMAP" id="MF_00051">
    <property type="entry name" value="SHMT"/>
    <property type="match status" value="1"/>
</dbReference>
<dbReference type="InterPro" id="IPR015424">
    <property type="entry name" value="PyrdxlP-dep_Trfase"/>
</dbReference>
<dbReference type="InterPro" id="IPR015421">
    <property type="entry name" value="PyrdxlP-dep_Trfase_major"/>
</dbReference>
<dbReference type="InterPro" id="IPR015422">
    <property type="entry name" value="PyrdxlP-dep_Trfase_small"/>
</dbReference>
<dbReference type="InterPro" id="IPR001085">
    <property type="entry name" value="Ser_HO-MeTrfase"/>
</dbReference>
<dbReference type="InterPro" id="IPR049943">
    <property type="entry name" value="Ser_HO-MeTrfase-like"/>
</dbReference>
<dbReference type="InterPro" id="IPR019798">
    <property type="entry name" value="Ser_HO-MeTrfase_PLP_BS"/>
</dbReference>
<dbReference type="InterPro" id="IPR039429">
    <property type="entry name" value="SHMT-like_dom"/>
</dbReference>
<dbReference type="NCBIfam" id="NF000586">
    <property type="entry name" value="PRK00011.1"/>
    <property type="match status" value="1"/>
</dbReference>
<dbReference type="PANTHER" id="PTHR11680">
    <property type="entry name" value="SERINE HYDROXYMETHYLTRANSFERASE"/>
    <property type="match status" value="1"/>
</dbReference>
<dbReference type="PANTHER" id="PTHR11680:SF50">
    <property type="entry name" value="SERINE HYDROXYMETHYLTRANSFERASE"/>
    <property type="match status" value="1"/>
</dbReference>
<dbReference type="Pfam" id="PF00464">
    <property type="entry name" value="SHMT"/>
    <property type="match status" value="1"/>
</dbReference>
<dbReference type="PIRSF" id="PIRSF000412">
    <property type="entry name" value="SHMT"/>
    <property type="match status" value="1"/>
</dbReference>
<dbReference type="SUPFAM" id="SSF53383">
    <property type="entry name" value="PLP-dependent transferases"/>
    <property type="match status" value="1"/>
</dbReference>
<dbReference type="PROSITE" id="PS00096">
    <property type="entry name" value="SHMT"/>
    <property type="match status" value="1"/>
</dbReference>
<feature type="chain" id="PRO_0000235005" description="Serine hydroxymethyltransferase 2">
    <location>
        <begin position="1"/>
        <end position="417"/>
    </location>
</feature>
<feature type="binding site" evidence="1">
    <location>
        <position position="121"/>
    </location>
    <ligand>
        <name>(6S)-5,6,7,8-tetrahydrofolate</name>
        <dbReference type="ChEBI" id="CHEBI:57453"/>
    </ligand>
</feature>
<feature type="binding site" evidence="1">
    <location>
        <begin position="125"/>
        <end position="127"/>
    </location>
    <ligand>
        <name>(6S)-5,6,7,8-tetrahydrofolate</name>
        <dbReference type="ChEBI" id="CHEBI:57453"/>
    </ligand>
</feature>
<feature type="binding site" evidence="1">
    <location>
        <begin position="354"/>
        <end position="356"/>
    </location>
    <ligand>
        <name>(6S)-5,6,7,8-tetrahydrofolate</name>
        <dbReference type="ChEBI" id="CHEBI:57453"/>
    </ligand>
</feature>
<feature type="site" description="Plays an important role in substrate specificity" evidence="1">
    <location>
        <position position="228"/>
    </location>
</feature>
<feature type="modified residue" description="N6-(pyridoxal phosphate)lysine" evidence="1">
    <location>
        <position position="229"/>
    </location>
</feature>
<accession>Q3K6J0</accession>
<comment type="function">
    <text evidence="1">Catalyzes the reversible interconversion of serine and glycine with tetrahydrofolate (THF) serving as the one-carbon carrier. This reaction serves as the major source of one-carbon groups required for the biosynthesis of purines, thymidylate, methionine, and other important biomolecules. Also exhibits THF-independent aldolase activity toward beta-hydroxyamino acids, producing glycine and aldehydes, via a retro-aldol mechanism.</text>
</comment>
<comment type="catalytic activity">
    <reaction evidence="1">
        <text>(6R)-5,10-methylene-5,6,7,8-tetrahydrofolate + glycine + H2O = (6S)-5,6,7,8-tetrahydrofolate + L-serine</text>
        <dbReference type="Rhea" id="RHEA:15481"/>
        <dbReference type="ChEBI" id="CHEBI:15377"/>
        <dbReference type="ChEBI" id="CHEBI:15636"/>
        <dbReference type="ChEBI" id="CHEBI:33384"/>
        <dbReference type="ChEBI" id="CHEBI:57305"/>
        <dbReference type="ChEBI" id="CHEBI:57453"/>
        <dbReference type="EC" id="2.1.2.1"/>
    </reaction>
</comment>
<comment type="cofactor">
    <cofactor evidence="1">
        <name>pyridoxal 5'-phosphate</name>
        <dbReference type="ChEBI" id="CHEBI:597326"/>
    </cofactor>
</comment>
<comment type="pathway">
    <text evidence="1">One-carbon metabolism; tetrahydrofolate interconversion.</text>
</comment>
<comment type="pathway">
    <text evidence="1">Amino-acid biosynthesis; glycine biosynthesis; glycine from L-serine: step 1/1.</text>
</comment>
<comment type="subunit">
    <text evidence="1">Homodimer.</text>
</comment>
<comment type="subcellular location">
    <subcellularLocation>
        <location evidence="1">Cytoplasm</location>
    </subcellularLocation>
</comment>
<comment type="similarity">
    <text evidence="1">Belongs to the SHMT family.</text>
</comment>
<gene>
    <name evidence="1" type="primary">glyA2</name>
    <name type="ordered locus">Pfl01_4877</name>
</gene>